<gene>
    <name evidence="1" type="primary">glpK</name>
    <name type="ordered locus">OB2475</name>
</gene>
<keyword id="KW-0067">ATP-binding</keyword>
<keyword id="KW-0319">Glycerol metabolism</keyword>
<keyword id="KW-0418">Kinase</keyword>
<keyword id="KW-0547">Nucleotide-binding</keyword>
<keyword id="KW-0597">Phosphoprotein</keyword>
<keyword id="KW-1185">Reference proteome</keyword>
<keyword id="KW-0808">Transferase</keyword>
<accession>Q8ENK7</accession>
<sequence length="500" mass="55668">MSEKFILSIDQGTTSSRAILFNHKGEIVESAQKEFEQFFPKPGWVEHDANEIWTSVLACIADVLRKADIEANQIEGIGITNQRETTVVWDKNTGRPIYKAIVWQSRQTEGICKELKEQGHEDTIRHKTGLLIDPYFSGTKVKWILDNVDGAREKAEAGELSFGTIDSWLIYRLSGGKTHVTDYSNASRTLMFNIYDLKWDDELLEILDVPKSMLPEVKPSSEVYANTVSYHFFGEEVPIAGVAGDQQAALFGQACFDQGMAKNTYGTGCFLLMNTGEEPVRSKHGLLTTIAWGVDGKVEYALEGSIFVAGSAIQWLRDGLRLIESSPQSEALASQVETTDGVYLVPAFVGLGTPYWDSDARGAVFGLTRGTTKEHFVRATLESLAYQTKDVMDAMLADSDIDLKKLRVDGGAVKNNLLMQFQSDILGVTVERPVVQETTALGSAYLAGLAVGFWKDKEEIAKQWLNEKTFENEMSEEESSYLYKGWQKAVEATRSFKFES</sequence>
<dbReference type="EC" id="2.7.1.30" evidence="1"/>
<dbReference type="EMBL" id="BA000028">
    <property type="protein sequence ID" value="BAC14431.1"/>
    <property type="molecule type" value="Genomic_DNA"/>
</dbReference>
<dbReference type="RefSeq" id="WP_011066868.1">
    <property type="nucleotide sequence ID" value="NC_004193.1"/>
</dbReference>
<dbReference type="SMR" id="Q8ENK7"/>
<dbReference type="STRING" id="221109.gene:10734727"/>
<dbReference type="KEGG" id="oih:OB2475"/>
<dbReference type="eggNOG" id="COG0554">
    <property type="taxonomic scope" value="Bacteria"/>
</dbReference>
<dbReference type="HOGENOM" id="CLU_009281_2_3_9"/>
<dbReference type="OrthoDB" id="9805576at2"/>
<dbReference type="PhylomeDB" id="Q8ENK7"/>
<dbReference type="UniPathway" id="UPA00618">
    <property type="reaction ID" value="UER00672"/>
</dbReference>
<dbReference type="Proteomes" id="UP000000822">
    <property type="component" value="Chromosome"/>
</dbReference>
<dbReference type="GO" id="GO:0005829">
    <property type="term" value="C:cytosol"/>
    <property type="evidence" value="ECO:0007669"/>
    <property type="project" value="TreeGrafter"/>
</dbReference>
<dbReference type="GO" id="GO:0005524">
    <property type="term" value="F:ATP binding"/>
    <property type="evidence" value="ECO:0007669"/>
    <property type="project" value="UniProtKB-UniRule"/>
</dbReference>
<dbReference type="GO" id="GO:0004370">
    <property type="term" value="F:glycerol kinase activity"/>
    <property type="evidence" value="ECO:0000250"/>
    <property type="project" value="UniProtKB"/>
</dbReference>
<dbReference type="GO" id="GO:0019563">
    <property type="term" value="P:glycerol catabolic process"/>
    <property type="evidence" value="ECO:0007669"/>
    <property type="project" value="UniProtKB-UniRule"/>
</dbReference>
<dbReference type="GO" id="GO:0006071">
    <property type="term" value="P:glycerol metabolic process"/>
    <property type="evidence" value="ECO:0000250"/>
    <property type="project" value="UniProtKB"/>
</dbReference>
<dbReference type="GO" id="GO:0006072">
    <property type="term" value="P:glycerol-3-phosphate metabolic process"/>
    <property type="evidence" value="ECO:0007669"/>
    <property type="project" value="InterPro"/>
</dbReference>
<dbReference type="CDD" id="cd07786">
    <property type="entry name" value="FGGY_EcGK_like"/>
    <property type="match status" value="1"/>
</dbReference>
<dbReference type="FunFam" id="3.30.420.40:FF:000007">
    <property type="entry name" value="Glycerol kinase"/>
    <property type="match status" value="1"/>
</dbReference>
<dbReference type="FunFam" id="3.30.420.40:FF:000008">
    <property type="entry name" value="Glycerol kinase"/>
    <property type="match status" value="1"/>
</dbReference>
<dbReference type="Gene3D" id="3.30.420.40">
    <property type="match status" value="2"/>
</dbReference>
<dbReference type="HAMAP" id="MF_00186">
    <property type="entry name" value="Glycerol_kin"/>
    <property type="match status" value="1"/>
</dbReference>
<dbReference type="InterPro" id="IPR043129">
    <property type="entry name" value="ATPase_NBD"/>
</dbReference>
<dbReference type="InterPro" id="IPR000577">
    <property type="entry name" value="Carb_kinase_FGGY"/>
</dbReference>
<dbReference type="InterPro" id="IPR018483">
    <property type="entry name" value="Carb_kinase_FGGY_CS"/>
</dbReference>
<dbReference type="InterPro" id="IPR018485">
    <property type="entry name" value="FGGY_C"/>
</dbReference>
<dbReference type="InterPro" id="IPR018484">
    <property type="entry name" value="FGGY_N"/>
</dbReference>
<dbReference type="InterPro" id="IPR005999">
    <property type="entry name" value="Glycerol_kin"/>
</dbReference>
<dbReference type="NCBIfam" id="TIGR01311">
    <property type="entry name" value="glycerol_kin"/>
    <property type="match status" value="1"/>
</dbReference>
<dbReference type="NCBIfam" id="NF000756">
    <property type="entry name" value="PRK00047.1"/>
    <property type="match status" value="1"/>
</dbReference>
<dbReference type="PANTHER" id="PTHR10196:SF69">
    <property type="entry name" value="GLYCEROL KINASE"/>
    <property type="match status" value="1"/>
</dbReference>
<dbReference type="PANTHER" id="PTHR10196">
    <property type="entry name" value="SUGAR KINASE"/>
    <property type="match status" value="1"/>
</dbReference>
<dbReference type="Pfam" id="PF02782">
    <property type="entry name" value="FGGY_C"/>
    <property type="match status" value="1"/>
</dbReference>
<dbReference type="Pfam" id="PF00370">
    <property type="entry name" value="FGGY_N"/>
    <property type="match status" value="1"/>
</dbReference>
<dbReference type="PIRSF" id="PIRSF000538">
    <property type="entry name" value="GlpK"/>
    <property type="match status" value="1"/>
</dbReference>
<dbReference type="SUPFAM" id="SSF53067">
    <property type="entry name" value="Actin-like ATPase domain"/>
    <property type="match status" value="2"/>
</dbReference>
<dbReference type="PROSITE" id="PS00933">
    <property type="entry name" value="FGGY_KINASES_1"/>
    <property type="match status" value="1"/>
</dbReference>
<dbReference type="PROSITE" id="PS00445">
    <property type="entry name" value="FGGY_KINASES_2"/>
    <property type="match status" value="1"/>
</dbReference>
<evidence type="ECO:0000255" key="1">
    <source>
        <dbReference type="HAMAP-Rule" id="MF_00186"/>
    </source>
</evidence>
<reference key="1">
    <citation type="journal article" date="2002" name="Nucleic Acids Res.">
        <title>Genome sequence of Oceanobacillus iheyensis isolated from the Iheya Ridge and its unexpected adaptive capabilities to extreme environments.</title>
        <authorList>
            <person name="Takami H."/>
            <person name="Takaki Y."/>
            <person name="Uchiyama I."/>
        </authorList>
    </citation>
    <scope>NUCLEOTIDE SEQUENCE [LARGE SCALE GENOMIC DNA]</scope>
    <source>
        <strain>DSM 14371 / CIP 107618 / JCM 11309 / KCTC 3954 / HTE831</strain>
    </source>
</reference>
<organism>
    <name type="scientific">Oceanobacillus iheyensis (strain DSM 14371 / CIP 107618 / JCM 11309 / KCTC 3954 / HTE831)</name>
    <dbReference type="NCBI Taxonomy" id="221109"/>
    <lineage>
        <taxon>Bacteria</taxon>
        <taxon>Bacillati</taxon>
        <taxon>Bacillota</taxon>
        <taxon>Bacilli</taxon>
        <taxon>Bacillales</taxon>
        <taxon>Bacillaceae</taxon>
        <taxon>Oceanobacillus</taxon>
    </lineage>
</organism>
<proteinExistence type="inferred from homology"/>
<feature type="chain" id="PRO_0000059473" description="Glycerol kinase">
    <location>
        <begin position="1"/>
        <end position="500"/>
    </location>
</feature>
<feature type="binding site" evidence="1">
    <location>
        <position position="13"/>
    </location>
    <ligand>
        <name>ADP</name>
        <dbReference type="ChEBI" id="CHEBI:456216"/>
    </ligand>
</feature>
<feature type="binding site" evidence="1">
    <location>
        <position position="13"/>
    </location>
    <ligand>
        <name>ATP</name>
        <dbReference type="ChEBI" id="CHEBI:30616"/>
    </ligand>
</feature>
<feature type="binding site" evidence="1">
    <location>
        <position position="13"/>
    </location>
    <ligand>
        <name>sn-glycerol 3-phosphate</name>
        <dbReference type="ChEBI" id="CHEBI:57597"/>
    </ligand>
</feature>
<feature type="binding site" evidence="1">
    <location>
        <position position="14"/>
    </location>
    <ligand>
        <name>ATP</name>
        <dbReference type="ChEBI" id="CHEBI:30616"/>
    </ligand>
</feature>
<feature type="binding site" evidence="1">
    <location>
        <position position="15"/>
    </location>
    <ligand>
        <name>ATP</name>
        <dbReference type="ChEBI" id="CHEBI:30616"/>
    </ligand>
</feature>
<feature type="binding site" evidence="1">
    <location>
        <position position="17"/>
    </location>
    <ligand>
        <name>ADP</name>
        <dbReference type="ChEBI" id="CHEBI:456216"/>
    </ligand>
</feature>
<feature type="binding site" evidence="1">
    <location>
        <position position="83"/>
    </location>
    <ligand>
        <name>glycerol</name>
        <dbReference type="ChEBI" id="CHEBI:17754"/>
    </ligand>
</feature>
<feature type="binding site" evidence="1">
    <location>
        <position position="83"/>
    </location>
    <ligand>
        <name>sn-glycerol 3-phosphate</name>
        <dbReference type="ChEBI" id="CHEBI:57597"/>
    </ligand>
</feature>
<feature type="binding site" evidence="1">
    <location>
        <position position="84"/>
    </location>
    <ligand>
        <name>glycerol</name>
        <dbReference type="ChEBI" id="CHEBI:17754"/>
    </ligand>
</feature>
<feature type="binding site" evidence="1">
    <location>
        <position position="84"/>
    </location>
    <ligand>
        <name>sn-glycerol 3-phosphate</name>
        <dbReference type="ChEBI" id="CHEBI:57597"/>
    </ligand>
</feature>
<feature type="binding site" evidence="1">
    <location>
        <position position="135"/>
    </location>
    <ligand>
        <name>glycerol</name>
        <dbReference type="ChEBI" id="CHEBI:17754"/>
    </ligand>
</feature>
<feature type="binding site" evidence="1">
    <location>
        <position position="135"/>
    </location>
    <ligand>
        <name>sn-glycerol 3-phosphate</name>
        <dbReference type="ChEBI" id="CHEBI:57597"/>
    </ligand>
</feature>
<feature type="binding site" evidence="1">
    <location>
        <position position="245"/>
    </location>
    <ligand>
        <name>glycerol</name>
        <dbReference type="ChEBI" id="CHEBI:17754"/>
    </ligand>
</feature>
<feature type="binding site" evidence="1">
    <location>
        <position position="245"/>
    </location>
    <ligand>
        <name>sn-glycerol 3-phosphate</name>
        <dbReference type="ChEBI" id="CHEBI:57597"/>
    </ligand>
</feature>
<feature type="binding site" evidence="1">
    <location>
        <position position="246"/>
    </location>
    <ligand>
        <name>glycerol</name>
        <dbReference type="ChEBI" id="CHEBI:17754"/>
    </ligand>
</feature>
<feature type="binding site" evidence="1">
    <location>
        <position position="267"/>
    </location>
    <ligand>
        <name>ADP</name>
        <dbReference type="ChEBI" id="CHEBI:456216"/>
    </ligand>
</feature>
<feature type="binding site" evidence="1">
    <location>
        <position position="267"/>
    </location>
    <ligand>
        <name>ATP</name>
        <dbReference type="ChEBI" id="CHEBI:30616"/>
    </ligand>
</feature>
<feature type="binding site" evidence="1">
    <location>
        <position position="310"/>
    </location>
    <ligand>
        <name>ADP</name>
        <dbReference type="ChEBI" id="CHEBI:456216"/>
    </ligand>
</feature>
<feature type="binding site" evidence="1">
    <location>
        <position position="310"/>
    </location>
    <ligand>
        <name>ATP</name>
        <dbReference type="ChEBI" id="CHEBI:30616"/>
    </ligand>
</feature>
<feature type="binding site" evidence="1">
    <location>
        <position position="314"/>
    </location>
    <ligand>
        <name>ATP</name>
        <dbReference type="ChEBI" id="CHEBI:30616"/>
    </ligand>
</feature>
<feature type="binding site" evidence="1">
    <location>
        <position position="411"/>
    </location>
    <ligand>
        <name>ADP</name>
        <dbReference type="ChEBI" id="CHEBI:456216"/>
    </ligand>
</feature>
<feature type="binding site" evidence="1">
    <location>
        <position position="411"/>
    </location>
    <ligand>
        <name>ATP</name>
        <dbReference type="ChEBI" id="CHEBI:30616"/>
    </ligand>
</feature>
<feature type="binding site" evidence="1">
    <location>
        <position position="415"/>
    </location>
    <ligand>
        <name>ADP</name>
        <dbReference type="ChEBI" id="CHEBI:456216"/>
    </ligand>
</feature>
<feature type="modified residue" description="Phosphohistidine; by HPr" evidence="1">
    <location>
        <position position="231"/>
    </location>
</feature>
<name>GLPK_OCEIH</name>
<comment type="function">
    <text evidence="1">Key enzyme in the regulation of glycerol uptake and metabolism. Catalyzes the phosphorylation of glycerol to yield sn-glycerol 3-phosphate.</text>
</comment>
<comment type="catalytic activity">
    <reaction evidence="1">
        <text>glycerol + ATP = sn-glycerol 3-phosphate + ADP + H(+)</text>
        <dbReference type="Rhea" id="RHEA:21644"/>
        <dbReference type="ChEBI" id="CHEBI:15378"/>
        <dbReference type="ChEBI" id="CHEBI:17754"/>
        <dbReference type="ChEBI" id="CHEBI:30616"/>
        <dbReference type="ChEBI" id="CHEBI:57597"/>
        <dbReference type="ChEBI" id="CHEBI:456216"/>
        <dbReference type="EC" id="2.7.1.30"/>
    </reaction>
</comment>
<comment type="activity regulation">
    <text evidence="1">Activated by phosphorylation and inhibited by fructose 1,6-bisphosphate (FBP).</text>
</comment>
<comment type="pathway">
    <text evidence="1">Polyol metabolism; glycerol degradation via glycerol kinase pathway; sn-glycerol 3-phosphate from glycerol: step 1/1.</text>
</comment>
<comment type="subunit">
    <text evidence="1">Homotetramer and homodimer (in equilibrium).</text>
</comment>
<comment type="PTM">
    <text evidence="1">The phosphoenolpyruvate-dependent sugar phosphotransferase system (PTS), including enzyme I, and histidine-containing protein (HPr) are required for the phosphorylation, which leads to the activation of the enzyme.</text>
</comment>
<comment type="similarity">
    <text evidence="1">Belongs to the FGGY kinase family.</text>
</comment>
<protein>
    <recommendedName>
        <fullName evidence="1">Glycerol kinase</fullName>
        <ecNumber evidence="1">2.7.1.30</ecNumber>
    </recommendedName>
    <alternativeName>
        <fullName evidence="1">ATP:glycerol 3-phosphotransferase</fullName>
    </alternativeName>
    <alternativeName>
        <fullName evidence="1">Glycerokinase</fullName>
        <shortName evidence="1">GK</shortName>
    </alternativeName>
</protein>